<name>YIAA_ECOLI</name>
<reference key="1">
    <citation type="journal article" date="1984" name="Appl. Environ. Microbiol.">
        <title>Cloning and sequencing of the xylose isomerase and xylulose kinase genes of Escherichia coli.</title>
        <authorList>
            <person name="Lawlis V.B."/>
            <person name="Dennis M.S."/>
            <person name="Chen E.Y."/>
            <person name="Smith D.H."/>
            <person name="Henner D.J."/>
        </authorList>
    </citation>
    <scope>NUCLEOTIDE SEQUENCE [GENOMIC DNA]</scope>
    <source>
        <strain>K12 / MM294 / ATCC 33625 / DSM 5208</strain>
    </source>
</reference>
<reference key="2">
    <citation type="journal article" date="1994" name="Nucleic Acids Res.">
        <title>Analysis of the Escherichia coli genome. V. DNA sequence of the region from 76.0 to 81.5 minutes.</title>
        <authorList>
            <person name="Sofia H.J."/>
            <person name="Burland V."/>
            <person name="Daniels D.L."/>
            <person name="Plunkett G. III"/>
            <person name="Blattner F.R."/>
        </authorList>
    </citation>
    <scope>NUCLEOTIDE SEQUENCE [LARGE SCALE GENOMIC DNA]</scope>
    <source>
        <strain>K12 / MG1655 / ATCC 47076</strain>
    </source>
</reference>
<reference key="3">
    <citation type="journal article" date="1997" name="Science">
        <title>The complete genome sequence of Escherichia coli K-12.</title>
        <authorList>
            <person name="Blattner F.R."/>
            <person name="Plunkett G. III"/>
            <person name="Bloch C.A."/>
            <person name="Perna N.T."/>
            <person name="Burland V."/>
            <person name="Riley M."/>
            <person name="Collado-Vides J."/>
            <person name="Glasner J.D."/>
            <person name="Rode C.K."/>
            <person name="Mayhew G.F."/>
            <person name="Gregor J."/>
            <person name="Davis N.W."/>
            <person name="Kirkpatrick H.A."/>
            <person name="Goeden M.A."/>
            <person name="Rose D.J."/>
            <person name="Mau B."/>
            <person name="Shao Y."/>
        </authorList>
    </citation>
    <scope>NUCLEOTIDE SEQUENCE [LARGE SCALE GENOMIC DNA]</scope>
    <source>
        <strain>K12 / MG1655 / ATCC 47076</strain>
    </source>
</reference>
<reference key="4">
    <citation type="journal article" date="2006" name="Mol. Syst. Biol.">
        <title>Highly accurate genome sequences of Escherichia coli K-12 strains MG1655 and W3110.</title>
        <authorList>
            <person name="Hayashi K."/>
            <person name="Morooka N."/>
            <person name="Yamamoto Y."/>
            <person name="Fujita K."/>
            <person name="Isono K."/>
            <person name="Choi S."/>
            <person name="Ohtsubo E."/>
            <person name="Baba T."/>
            <person name="Wanner B.L."/>
            <person name="Mori H."/>
            <person name="Horiuchi T."/>
        </authorList>
    </citation>
    <scope>NUCLEOTIDE SEQUENCE [LARGE SCALE GENOMIC DNA]</scope>
    <source>
        <strain>K12 / W3110 / ATCC 27325 / DSM 5911</strain>
    </source>
</reference>
<reference key="5">
    <citation type="journal article" date="2005" name="Science">
        <title>Global topology analysis of the Escherichia coli inner membrane proteome.</title>
        <authorList>
            <person name="Daley D.O."/>
            <person name="Rapp M."/>
            <person name="Granseth E."/>
            <person name="Melen K."/>
            <person name="Drew D."/>
            <person name="von Heijne G."/>
        </authorList>
    </citation>
    <scope>TOPOLOGY [LARGE SCALE ANALYSIS]</scope>
    <source>
        <strain>K12 / MG1655 / ATCC 47076</strain>
    </source>
</reference>
<proteinExistence type="evidence at protein level"/>
<protein>
    <recommendedName>
        <fullName>Inner membrane protein YiaA</fullName>
    </recommendedName>
</protein>
<evidence type="ECO:0000255" key="1"/>
<evidence type="ECO:0000305" key="2"/>
<organism>
    <name type="scientific">Escherichia coli (strain K12)</name>
    <dbReference type="NCBI Taxonomy" id="83333"/>
    <lineage>
        <taxon>Bacteria</taxon>
        <taxon>Pseudomonadati</taxon>
        <taxon>Pseudomonadota</taxon>
        <taxon>Gammaproteobacteria</taxon>
        <taxon>Enterobacterales</taxon>
        <taxon>Enterobacteriaceae</taxon>
        <taxon>Escherichia</taxon>
    </lineage>
</organism>
<accession>P0ADJ8</accession>
<accession>P11287</accession>
<accession>P76715</accession>
<accession>Q2M7M5</accession>
<feature type="chain" id="PRO_0000169587" description="Inner membrane protein YiaA">
    <location>
        <begin position="1"/>
        <end position="145"/>
    </location>
</feature>
<feature type="topological domain" description="Cytoplasmic" evidence="1">
    <location>
        <begin position="1"/>
        <end position="12"/>
    </location>
</feature>
<feature type="transmembrane region" description="Helical" evidence="1">
    <location>
        <begin position="13"/>
        <end position="32"/>
    </location>
</feature>
<feature type="topological domain" description="Periplasmic" evidence="1">
    <location>
        <begin position="33"/>
        <end position="41"/>
    </location>
</feature>
<feature type="transmembrane region" description="Helical" evidence="1">
    <location>
        <begin position="42"/>
        <end position="59"/>
    </location>
</feature>
<feature type="topological domain" description="Cytoplasmic" evidence="1">
    <location>
        <begin position="60"/>
        <end position="71"/>
    </location>
</feature>
<feature type="transmembrane region" description="Helical" evidence="1">
    <location>
        <begin position="72"/>
        <end position="94"/>
    </location>
</feature>
<feature type="topological domain" description="Periplasmic" evidence="1">
    <location>
        <begin position="95"/>
        <end position="98"/>
    </location>
</feature>
<feature type="transmembrane region" description="Helical" evidence="1">
    <location>
        <begin position="99"/>
        <end position="121"/>
    </location>
</feature>
<feature type="topological domain" description="Cytoplasmic" evidence="1">
    <location>
        <begin position="122"/>
        <end position="145"/>
    </location>
</feature>
<keyword id="KW-0997">Cell inner membrane</keyword>
<keyword id="KW-1003">Cell membrane</keyword>
<keyword id="KW-0472">Membrane</keyword>
<keyword id="KW-1185">Reference proteome</keyword>
<keyword id="KW-0812">Transmembrane</keyword>
<keyword id="KW-1133">Transmembrane helix</keyword>
<sequence>MDNKISTYSPAFSIVSWIALVGGIVTYLLGLWNAEMQLNEKGYYFAVLVLGLFSAASYQKTVRDKYEGIPTTSIYYMTCLTVFIISVALLMVGLWNATLLLSEKGFYGLAFFLSLFGAVAVQKNIRDAGINPPKETQVTQEEYSE</sequence>
<gene>
    <name type="primary">yiaA</name>
    <name type="ordered locus">b3562</name>
    <name type="ordered locus">JW3534</name>
</gene>
<comment type="subcellular location">
    <subcellularLocation>
        <location>Cell inner membrane</location>
        <topology>Multi-pass membrane protein</topology>
    </subcellularLocation>
</comment>
<comment type="sequence caution" evidence="2">
    <conflict type="erroneous initiation">
        <sequence resource="EMBL-CDS" id="AAB18539"/>
    </conflict>
    <text>Extended N-terminus.</text>
</comment>
<dbReference type="EMBL" id="K01996">
    <property type="protein sequence ID" value="AAA24770.1"/>
    <property type="molecule type" value="Genomic_DNA"/>
</dbReference>
<dbReference type="EMBL" id="X04691">
    <property type="protein sequence ID" value="CAB46441.1"/>
    <property type="molecule type" value="Genomic_DNA"/>
</dbReference>
<dbReference type="EMBL" id="U00039">
    <property type="protein sequence ID" value="AAB18539.1"/>
    <property type="status" value="ALT_INIT"/>
    <property type="molecule type" value="Genomic_DNA"/>
</dbReference>
<dbReference type="EMBL" id="U00096">
    <property type="protein sequence ID" value="AAC76586.2"/>
    <property type="molecule type" value="Genomic_DNA"/>
</dbReference>
<dbReference type="EMBL" id="AP009048">
    <property type="protein sequence ID" value="BAE77731.1"/>
    <property type="molecule type" value="Genomic_DNA"/>
</dbReference>
<dbReference type="RefSeq" id="NP_418019.4">
    <property type="nucleotide sequence ID" value="NC_000913.3"/>
</dbReference>
<dbReference type="RefSeq" id="WP_001296808.1">
    <property type="nucleotide sequence ID" value="NZ_STEB01000018.1"/>
</dbReference>
<dbReference type="SMR" id="P0ADJ8"/>
<dbReference type="BioGRID" id="4261726">
    <property type="interactions" value="8"/>
</dbReference>
<dbReference type="FunCoup" id="P0ADJ8">
    <property type="interactions" value="355"/>
</dbReference>
<dbReference type="STRING" id="511145.b3562"/>
<dbReference type="TCDB" id="9.B.44.1.1">
    <property type="family name" value="the yiaa-yiab (yiaab) family"/>
</dbReference>
<dbReference type="PaxDb" id="511145-b3562"/>
<dbReference type="EnsemblBacteria" id="AAC76586">
    <property type="protein sequence ID" value="AAC76586"/>
    <property type="gene ID" value="b3562"/>
</dbReference>
<dbReference type="GeneID" id="75203017"/>
<dbReference type="GeneID" id="948078"/>
<dbReference type="KEGG" id="ecj:JW3534"/>
<dbReference type="KEGG" id="eco:b3562"/>
<dbReference type="KEGG" id="ecoc:C3026_19315"/>
<dbReference type="PATRIC" id="fig|1411691.4.peg.3150"/>
<dbReference type="EchoBASE" id="EB1172"/>
<dbReference type="eggNOG" id="COG4682">
    <property type="taxonomic scope" value="Bacteria"/>
</dbReference>
<dbReference type="HOGENOM" id="CLU_123353_0_0_6"/>
<dbReference type="InParanoid" id="P0ADJ8"/>
<dbReference type="OMA" id="GFYAFAF"/>
<dbReference type="OrthoDB" id="3295178at2"/>
<dbReference type="PhylomeDB" id="P0ADJ8"/>
<dbReference type="BioCyc" id="EcoCyc:EG11186-MONOMER"/>
<dbReference type="PRO" id="PR:P0ADJ8"/>
<dbReference type="Proteomes" id="UP000000625">
    <property type="component" value="Chromosome"/>
</dbReference>
<dbReference type="GO" id="GO:0005886">
    <property type="term" value="C:plasma membrane"/>
    <property type="evidence" value="ECO:0000314"/>
    <property type="project" value="EcoCyc"/>
</dbReference>
<dbReference type="GO" id="GO:0006974">
    <property type="term" value="P:DNA damage response"/>
    <property type="evidence" value="ECO:0000270"/>
    <property type="project" value="EcoliWiki"/>
</dbReference>
<dbReference type="InterPro" id="IPR038972">
    <property type="entry name" value="YiaA-like"/>
</dbReference>
<dbReference type="InterPro" id="IPR008024">
    <property type="entry name" value="YiaAB"/>
</dbReference>
<dbReference type="NCBIfam" id="NF008482">
    <property type="entry name" value="PRK11383.1"/>
    <property type="match status" value="1"/>
</dbReference>
<dbReference type="PANTHER" id="PTHR37290:SF1">
    <property type="entry name" value="INNER MEMBRANE PROTEIN YIAA"/>
    <property type="match status" value="1"/>
</dbReference>
<dbReference type="PANTHER" id="PTHR37290">
    <property type="entry name" value="INNER MEMBRANE PROTEIN YIAA-RELATED"/>
    <property type="match status" value="1"/>
</dbReference>
<dbReference type="Pfam" id="PF05360">
    <property type="entry name" value="YiaAB"/>
    <property type="match status" value="2"/>
</dbReference>